<protein>
    <recommendedName>
        <fullName evidence="1">Elongation factor P</fullName>
        <shortName evidence="1">EF-P</shortName>
    </recommendedName>
</protein>
<proteinExistence type="inferred from homology"/>
<sequence length="188" mass="20591">MATYYSNDFRAGLKIMLDGEPYAVEASEFVKPGKGQAFARVKLRRLLTGTRVEKTFKSTDSAEGADVVDMNLTYLYNDGEFWHFMNNETFEQLSADAKAIGDNAKWLLDQAECIVTLWNGQPISVTPPNFVELEIVDTDPGLKGDTAGTGGKPATLSTGAVVKVPLFVQIGEVIKVDTRSGEYVSRVK</sequence>
<reference key="1">
    <citation type="journal article" date="2007" name="J. Bacteriol.">
        <title>The genome sequence of avian pathogenic Escherichia coli strain O1:K1:H7 shares strong similarities with human extraintestinal pathogenic E. coli genomes.</title>
        <authorList>
            <person name="Johnson T.J."/>
            <person name="Kariyawasam S."/>
            <person name="Wannemuehler Y."/>
            <person name="Mangiamele P."/>
            <person name="Johnson S.J."/>
            <person name="Doetkott C."/>
            <person name="Skyberg J.A."/>
            <person name="Lynne A.M."/>
            <person name="Johnson J.R."/>
            <person name="Nolan L.K."/>
        </authorList>
    </citation>
    <scope>NUCLEOTIDE SEQUENCE [LARGE SCALE GENOMIC DNA]</scope>
</reference>
<dbReference type="EMBL" id="CP000468">
    <property type="protein sequence ID" value="ABJ03695.1"/>
    <property type="molecule type" value="Genomic_DNA"/>
</dbReference>
<dbReference type="RefSeq" id="WP_000257278.1">
    <property type="nucleotide sequence ID" value="NZ_CADILS010000036.1"/>
</dbReference>
<dbReference type="SMR" id="A1AJ55"/>
<dbReference type="GeneID" id="93777677"/>
<dbReference type="KEGG" id="ecv:APECO1_2242"/>
<dbReference type="HOGENOM" id="CLU_074944_0_0_6"/>
<dbReference type="UniPathway" id="UPA00345"/>
<dbReference type="Proteomes" id="UP000008216">
    <property type="component" value="Chromosome"/>
</dbReference>
<dbReference type="GO" id="GO:0005829">
    <property type="term" value="C:cytosol"/>
    <property type="evidence" value="ECO:0007669"/>
    <property type="project" value="UniProtKB-ARBA"/>
</dbReference>
<dbReference type="GO" id="GO:0003746">
    <property type="term" value="F:translation elongation factor activity"/>
    <property type="evidence" value="ECO:0007669"/>
    <property type="project" value="UniProtKB-UniRule"/>
</dbReference>
<dbReference type="GO" id="GO:0043043">
    <property type="term" value="P:peptide biosynthetic process"/>
    <property type="evidence" value="ECO:0007669"/>
    <property type="project" value="InterPro"/>
</dbReference>
<dbReference type="CDD" id="cd04470">
    <property type="entry name" value="S1_EF-P_repeat_1"/>
    <property type="match status" value="1"/>
</dbReference>
<dbReference type="CDD" id="cd05794">
    <property type="entry name" value="S1_EF-P_repeat_2"/>
    <property type="match status" value="1"/>
</dbReference>
<dbReference type="FunFam" id="2.30.30.30:FF:000003">
    <property type="entry name" value="Elongation factor P"/>
    <property type="match status" value="1"/>
</dbReference>
<dbReference type="FunFam" id="2.40.50.140:FF:000004">
    <property type="entry name" value="Elongation factor P"/>
    <property type="match status" value="1"/>
</dbReference>
<dbReference type="FunFam" id="2.40.50.140:FF:000009">
    <property type="entry name" value="Elongation factor P"/>
    <property type="match status" value="1"/>
</dbReference>
<dbReference type="Gene3D" id="2.30.30.30">
    <property type="match status" value="1"/>
</dbReference>
<dbReference type="Gene3D" id="2.40.50.140">
    <property type="entry name" value="Nucleic acid-binding proteins"/>
    <property type="match status" value="2"/>
</dbReference>
<dbReference type="HAMAP" id="MF_00141">
    <property type="entry name" value="EF_P"/>
    <property type="match status" value="1"/>
</dbReference>
<dbReference type="InterPro" id="IPR015365">
    <property type="entry name" value="Elong-fact-P_C"/>
</dbReference>
<dbReference type="InterPro" id="IPR012340">
    <property type="entry name" value="NA-bd_OB-fold"/>
</dbReference>
<dbReference type="InterPro" id="IPR014722">
    <property type="entry name" value="Rib_uL2_dom2"/>
</dbReference>
<dbReference type="InterPro" id="IPR020599">
    <property type="entry name" value="Transl_elong_fac_P/YeiP"/>
</dbReference>
<dbReference type="InterPro" id="IPR013185">
    <property type="entry name" value="Transl_elong_KOW-like"/>
</dbReference>
<dbReference type="InterPro" id="IPR001059">
    <property type="entry name" value="Transl_elong_P/YeiP_cen"/>
</dbReference>
<dbReference type="InterPro" id="IPR013852">
    <property type="entry name" value="Transl_elong_P/YeiP_CS"/>
</dbReference>
<dbReference type="InterPro" id="IPR011768">
    <property type="entry name" value="Transl_elongation_fac_P"/>
</dbReference>
<dbReference type="InterPro" id="IPR008991">
    <property type="entry name" value="Translation_prot_SH3-like_sf"/>
</dbReference>
<dbReference type="NCBIfam" id="TIGR00038">
    <property type="entry name" value="efp"/>
    <property type="match status" value="1"/>
</dbReference>
<dbReference type="NCBIfam" id="NF001810">
    <property type="entry name" value="PRK00529.1"/>
    <property type="match status" value="1"/>
</dbReference>
<dbReference type="PANTHER" id="PTHR30053">
    <property type="entry name" value="ELONGATION FACTOR P"/>
    <property type="match status" value="1"/>
</dbReference>
<dbReference type="PANTHER" id="PTHR30053:SF12">
    <property type="entry name" value="ELONGATION FACTOR P (EF-P) FAMILY PROTEIN"/>
    <property type="match status" value="1"/>
</dbReference>
<dbReference type="Pfam" id="PF01132">
    <property type="entry name" value="EFP"/>
    <property type="match status" value="1"/>
</dbReference>
<dbReference type="Pfam" id="PF08207">
    <property type="entry name" value="EFP_N"/>
    <property type="match status" value="1"/>
</dbReference>
<dbReference type="Pfam" id="PF09285">
    <property type="entry name" value="Elong-fact-P_C"/>
    <property type="match status" value="1"/>
</dbReference>
<dbReference type="PIRSF" id="PIRSF005901">
    <property type="entry name" value="EF-P"/>
    <property type="match status" value="1"/>
</dbReference>
<dbReference type="SMART" id="SM01185">
    <property type="entry name" value="EFP"/>
    <property type="match status" value="1"/>
</dbReference>
<dbReference type="SMART" id="SM00841">
    <property type="entry name" value="Elong-fact-P_C"/>
    <property type="match status" value="1"/>
</dbReference>
<dbReference type="SUPFAM" id="SSF50249">
    <property type="entry name" value="Nucleic acid-binding proteins"/>
    <property type="match status" value="2"/>
</dbReference>
<dbReference type="SUPFAM" id="SSF50104">
    <property type="entry name" value="Translation proteins SH3-like domain"/>
    <property type="match status" value="1"/>
</dbReference>
<dbReference type="PROSITE" id="PS01275">
    <property type="entry name" value="EFP"/>
    <property type="match status" value="1"/>
</dbReference>
<feature type="chain" id="PRO_1000010734" description="Elongation factor P">
    <location>
        <begin position="1"/>
        <end position="188"/>
    </location>
</feature>
<feature type="modified residue" description="N6-(3,6-diaminohexanoyl)-5-hydroxylysine" evidence="1">
    <location>
        <position position="34"/>
    </location>
</feature>
<keyword id="KW-0963">Cytoplasm</keyword>
<keyword id="KW-0251">Elongation factor</keyword>
<keyword id="KW-0379">Hydroxylation</keyword>
<keyword id="KW-0648">Protein biosynthesis</keyword>
<keyword id="KW-1185">Reference proteome</keyword>
<evidence type="ECO:0000255" key="1">
    <source>
        <dbReference type="HAMAP-Rule" id="MF_00141"/>
    </source>
</evidence>
<organism>
    <name type="scientific">Escherichia coli O1:K1 / APEC</name>
    <dbReference type="NCBI Taxonomy" id="405955"/>
    <lineage>
        <taxon>Bacteria</taxon>
        <taxon>Pseudomonadati</taxon>
        <taxon>Pseudomonadota</taxon>
        <taxon>Gammaproteobacteria</taxon>
        <taxon>Enterobacterales</taxon>
        <taxon>Enterobacteriaceae</taxon>
        <taxon>Escherichia</taxon>
    </lineage>
</organism>
<accession>A1AJ55</accession>
<name>EFP_ECOK1</name>
<gene>
    <name evidence="1" type="primary">efp</name>
    <name type="ordered locus">Ecok1_42010</name>
    <name type="ORF">APECO1_2242</name>
</gene>
<comment type="function">
    <text evidence="1">Involved in peptide bond synthesis. Alleviates ribosome stalling that occurs when 3 or more consecutive Pro residues or the sequence PPG is present in a protein, possibly by augmenting the peptidyl transferase activity of the ribosome. Modification of Lys-34 is required for alleviation.</text>
</comment>
<comment type="pathway">
    <text evidence="1">Protein biosynthesis; polypeptide chain elongation.</text>
</comment>
<comment type="subcellular location">
    <subcellularLocation>
        <location evidence="1">Cytoplasm</location>
    </subcellularLocation>
</comment>
<comment type="PTM">
    <text evidence="1">Is beta-lysylated on the epsilon-amino group of Lys-34 by the combined action of EpmA and EpmB, and then hydroxylated on the C5 position of the same residue by EpmC. Lysylation is critical for the stimulatory effect of EF-P on peptide-bond formation. The lysylation moiety would extend toward the peptidyltransferase center and stabilize the terminal 3-CCA end of the tRNA. The hydroxylation of the C5 position on Lys-34 would allow additional potential stabilizing hydrogen-bond interactions with the P-tRNA.</text>
</comment>
<comment type="similarity">
    <text evidence="1">Belongs to the elongation factor P family.</text>
</comment>